<accession>A5CCZ7</accession>
<protein>
    <recommendedName>
        <fullName evidence="1">Large ribosomal subunit protein bL33</fullName>
    </recommendedName>
    <alternativeName>
        <fullName evidence="2">50S ribosomal protein L33</fullName>
    </alternativeName>
</protein>
<proteinExistence type="inferred from homology"/>
<dbReference type="EMBL" id="AM494475">
    <property type="protein sequence ID" value="CAM79631.1"/>
    <property type="molecule type" value="Genomic_DNA"/>
</dbReference>
<dbReference type="RefSeq" id="WP_011944547.1">
    <property type="nucleotide sequence ID" value="NC_009488.1"/>
</dbReference>
<dbReference type="SMR" id="A5CCZ7"/>
<dbReference type="KEGG" id="ots:OTBS_0565"/>
<dbReference type="eggNOG" id="COG0267">
    <property type="taxonomic scope" value="Bacteria"/>
</dbReference>
<dbReference type="HOGENOM" id="CLU_190949_1_0_5"/>
<dbReference type="Proteomes" id="UP000001565">
    <property type="component" value="Chromosome"/>
</dbReference>
<dbReference type="GO" id="GO:0005737">
    <property type="term" value="C:cytoplasm"/>
    <property type="evidence" value="ECO:0007669"/>
    <property type="project" value="UniProtKB-ARBA"/>
</dbReference>
<dbReference type="GO" id="GO:0015934">
    <property type="term" value="C:large ribosomal subunit"/>
    <property type="evidence" value="ECO:0007669"/>
    <property type="project" value="TreeGrafter"/>
</dbReference>
<dbReference type="GO" id="GO:0003735">
    <property type="term" value="F:structural constituent of ribosome"/>
    <property type="evidence" value="ECO:0007669"/>
    <property type="project" value="InterPro"/>
</dbReference>
<dbReference type="GO" id="GO:0006412">
    <property type="term" value="P:translation"/>
    <property type="evidence" value="ECO:0007669"/>
    <property type="project" value="UniProtKB-UniRule"/>
</dbReference>
<dbReference type="Gene3D" id="2.20.28.120">
    <property type="entry name" value="Ribosomal protein L33"/>
    <property type="match status" value="1"/>
</dbReference>
<dbReference type="HAMAP" id="MF_00294">
    <property type="entry name" value="Ribosomal_bL33"/>
    <property type="match status" value="1"/>
</dbReference>
<dbReference type="InterPro" id="IPR001705">
    <property type="entry name" value="Ribosomal_bL33"/>
</dbReference>
<dbReference type="InterPro" id="IPR018264">
    <property type="entry name" value="Ribosomal_bL33_CS"/>
</dbReference>
<dbReference type="InterPro" id="IPR038584">
    <property type="entry name" value="Ribosomal_bL33_sf"/>
</dbReference>
<dbReference type="InterPro" id="IPR011332">
    <property type="entry name" value="Ribosomal_zn-bd"/>
</dbReference>
<dbReference type="NCBIfam" id="NF001860">
    <property type="entry name" value="PRK00595.1"/>
    <property type="match status" value="1"/>
</dbReference>
<dbReference type="NCBIfam" id="TIGR01023">
    <property type="entry name" value="rpmG_bact"/>
    <property type="match status" value="1"/>
</dbReference>
<dbReference type="PANTHER" id="PTHR15238">
    <property type="entry name" value="54S RIBOSOMAL PROTEIN L39, MITOCHONDRIAL"/>
    <property type="match status" value="1"/>
</dbReference>
<dbReference type="PANTHER" id="PTHR15238:SF1">
    <property type="entry name" value="LARGE RIBOSOMAL SUBUNIT PROTEIN BL33M"/>
    <property type="match status" value="1"/>
</dbReference>
<dbReference type="Pfam" id="PF00471">
    <property type="entry name" value="Ribosomal_L33"/>
    <property type="match status" value="1"/>
</dbReference>
<dbReference type="SUPFAM" id="SSF57829">
    <property type="entry name" value="Zn-binding ribosomal proteins"/>
    <property type="match status" value="1"/>
</dbReference>
<dbReference type="PROSITE" id="PS00582">
    <property type="entry name" value="RIBOSOMAL_L33"/>
    <property type="match status" value="1"/>
</dbReference>
<evidence type="ECO:0000255" key="1">
    <source>
        <dbReference type="HAMAP-Rule" id="MF_00294"/>
    </source>
</evidence>
<evidence type="ECO:0000305" key="2"/>
<reference key="1">
    <citation type="journal article" date="2007" name="Proc. Natl. Acad. Sci. U.S.A.">
        <title>The Orientia tsutsugamushi genome reveals massive proliferation of conjugative type IV secretion system and host-cell interaction genes.</title>
        <authorList>
            <person name="Cho N.-H."/>
            <person name="Kim H.-R."/>
            <person name="Lee J.-H."/>
            <person name="Kim S.-Y."/>
            <person name="Kim J."/>
            <person name="Cha S."/>
            <person name="Kim S.-Y."/>
            <person name="Darby A.C."/>
            <person name="Fuxelius H.-H."/>
            <person name="Yin J."/>
            <person name="Kim J.H."/>
            <person name="Kim J."/>
            <person name="Lee S.J."/>
            <person name="Koh Y.-S."/>
            <person name="Jang W.-J."/>
            <person name="Park K.-H."/>
            <person name="Andersson S.G.E."/>
            <person name="Choi M.-S."/>
            <person name="Kim I.-S."/>
        </authorList>
    </citation>
    <scope>NUCLEOTIDE SEQUENCE [LARGE SCALE GENOMIC DNA]</scope>
    <source>
        <strain>Boryong</strain>
    </source>
</reference>
<gene>
    <name evidence="1" type="primary">rpmG</name>
    <name type="ordered locus">OTBS_0565</name>
</gene>
<keyword id="KW-1185">Reference proteome</keyword>
<keyword id="KW-0687">Ribonucleoprotein</keyword>
<keyword id="KW-0689">Ribosomal protein</keyword>
<sequence>MSRKKKVLVKLVSSAGTGVFWVKQRNPKTQTEKLSFRKYDPKVRKHVQFTEAKIK</sequence>
<organism>
    <name type="scientific">Orientia tsutsugamushi (strain Boryong)</name>
    <name type="common">Rickettsia tsutsugamushi</name>
    <dbReference type="NCBI Taxonomy" id="357244"/>
    <lineage>
        <taxon>Bacteria</taxon>
        <taxon>Pseudomonadati</taxon>
        <taxon>Pseudomonadota</taxon>
        <taxon>Alphaproteobacteria</taxon>
        <taxon>Rickettsiales</taxon>
        <taxon>Rickettsiaceae</taxon>
        <taxon>Rickettsieae</taxon>
        <taxon>Orientia</taxon>
    </lineage>
</organism>
<feature type="chain" id="PRO_1000004176" description="Large ribosomal subunit protein bL33">
    <location>
        <begin position="1"/>
        <end position="55"/>
    </location>
</feature>
<name>RL33_ORITB</name>
<comment type="similarity">
    <text evidence="1">Belongs to the bacterial ribosomal protein bL33 family.</text>
</comment>